<protein>
    <recommendedName>
        <fullName>UPF0494 membrane protein C750.06c</fullName>
    </recommendedName>
</protein>
<evidence type="ECO:0000255" key="1"/>
<evidence type="ECO:0000269" key="2">
    <source>
    </source>
</evidence>
<evidence type="ECO:0000305" key="3"/>
<comment type="subcellular location">
    <subcellularLocation>
        <location evidence="2">Cytoplasm</location>
    </subcellularLocation>
    <subcellularLocation>
        <location evidence="2">Vacuole</location>
    </subcellularLocation>
    <subcellularLocation>
        <location evidence="3">Membrane</location>
        <topology evidence="3">Multi-pass membrane protein</topology>
    </subcellularLocation>
</comment>
<comment type="similarity">
    <text evidence="3">Belongs to the UPF0494 family.</text>
</comment>
<proteinExistence type="inferred from homology"/>
<gene>
    <name type="ORF">SPAC750.06c</name>
</gene>
<organism>
    <name type="scientific">Schizosaccharomyces pombe (strain 972 / ATCC 24843)</name>
    <name type="common">Fission yeast</name>
    <dbReference type="NCBI Taxonomy" id="284812"/>
    <lineage>
        <taxon>Eukaryota</taxon>
        <taxon>Fungi</taxon>
        <taxon>Dikarya</taxon>
        <taxon>Ascomycota</taxon>
        <taxon>Taphrinomycotina</taxon>
        <taxon>Schizosaccharomycetes</taxon>
        <taxon>Schizosaccharomycetales</taxon>
        <taxon>Schizosaccharomycetaceae</taxon>
        <taxon>Schizosaccharomyces</taxon>
    </lineage>
</organism>
<accession>Q9P3E5</accession>
<dbReference type="EMBL" id="CU329670">
    <property type="protein sequence ID" value="CAB98257.1"/>
    <property type="molecule type" value="Genomic_DNA"/>
</dbReference>
<dbReference type="RefSeq" id="NP_595032.1">
    <property type="nucleotide sequence ID" value="NM_001020462.1"/>
</dbReference>
<dbReference type="SMR" id="Q9P3E5"/>
<dbReference type="BioGRID" id="278142">
    <property type="interactions" value="13"/>
</dbReference>
<dbReference type="STRING" id="284812.Q9P3E5"/>
<dbReference type="PaxDb" id="4896-SPAC750.06c.1"/>
<dbReference type="EnsemblFungi" id="SPAC750.06c.1">
    <property type="protein sequence ID" value="SPAC750.06c.1:pep"/>
    <property type="gene ID" value="SPAC750.06c"/>
</dbReference>
<dbReference type="KEGG" id="spo:2541646"/>
<dbReference type="PomBase" id="SPAC750.06c"/>
<dbReference type="VEuPathDB" id="FungiDB:SPAC750.06c"/>
<dbReference type="HOGENOM" id="CLU_097271_0_0_1"/>
<dbReference type="InParanoid" id="Q9P3E5"/>
<dbReference type="PhylomeDB" id="Q9P3E5"/>
<dbReference type="PRO" id="PR:Q9P3E5"/>
<dbReference type="Proteomes" id="UP000002485">
    <property type="component" value="Chromosome I"/>
</dbReference>
<dbReference type="GO" id="GO:0005737">
    <property type="term" value="C:cytoplasm"/>
    <property type="evidence" value="ECO:0007005"/>
    <property type="project" value="PomBase"/>
</dbReference>
<dbReference type="GO" id="GO:0000324">
    <property type="term" value="C:fungal-type vacuole"/>
    <property type="evidence" value="ECO:0007005"/>
    <property type="project" value="PomBase"/>
</dbReference>
<dbReference type="GO" id="GO:0016020">
    <property type="term" value="C:membrane"/>
    <property type="evidence" value="ECO:0007669"/>
    <property type="project" value="UniProtKB-SubCell"/>
</dbReference>
<dbReference type="InterPro" id="IPR009340">
    <property type="entry name" value="DUF999"/>
</dbReference>
<dbReference type="Pfam" id="PF06198">
    <property type="entry name" value="DUF999"/>
    <property type="match status" value="1"/>
</dbReference>
<reference key="1">
    <citation type="journal article" date="2002" name="Nature">
        <title>The genome sequence of Schizosaccharomyces pombe.</title>
        <authorList>
            <person name="Wood V."/>
            <person name="Gwilliam R."/>
            <person name="Rajandream M.A."/>
            <person name="Lyne M.H."/>
            <person name="Lyne R."/>
            <person name="Stewart A."/>
            <person name="Sgouros J.G."/>
            <person name="Peat N."/>
            <person name="Hayles J."/>
            <person name="Baker S.G."/>
            <person name="Basham D."/>
            <person name="Bowman S."/>
            <person name="Brooks K."/>
            <person name="Brown D."/>
            <person name="Brown S."/>
            <person name="Chillingworth T."/>
            <person name="Churcher C.M."/>
            <person name="Collins M."/>
            <person name="Connor R."/>
            <person name="Cronin A."/>
            <person name="Davis P."/>
            <person name="Feltwell T."/>
            <person name="Fraser A."/>
            <person name="Gentles S."/>
            <person name="Goble A."/>
            <person name="Hamlin N."/>
            <person name="Harris D.E."/>
            <person name="Hidalgo J."/>
            <person name="Hodgson G."/>
            <person name="Holroyd S."/>
            <person name="Hornsby T."/>
            <person name="Howarth S."/>
            <person name="Huckle E.J."/>
            <person name="Hunt S."/>
            <person name="Jagels K."/>
            <person name="James K.D."/>
            <person name="Jones L."/>
            <person name="Jones M."/>
            <person name="Leather S."/>
            <person name="McDonald S."/>
            <person name="McLean J."/>
            <person name="Mooney P."/>
            <person name="Moule S."/>
            <person name="Mungall K.L."/>
            <person name="Murphy L.D."/>
            <person name="Niblett D."/>
            <person name="Odell C."/>
            <person name="Oliver K."/>
            <person name="O'Neil S."/>
            <person name="Pearson D."/>
            <person name="Quail M.A."/>
            <person name="Rabbinowitsch E."/>
            <person name="Rutherford K.M."/>
            <person name="Rutter S."/>
            <person name="Saunders D."/>
            <person name="Seeger K."/>
            <person name="Sharp S."/>
            <person name="Skelton J."/>
            <person name="Simmonds M.N."/>
            <person name="Squares R."/>
            <person name="Squares S."/>
            <person name="Stevens K."/>
            <person name="Taylor K."/>
            <person name="Taylor R.G."/>
            <person name="Tivey A."/>
            <person name="Walsh S.V."/>
            <person name="Warren T."/>
            <person name="Whitehead S."/>
            <person name="Woodward J.R."/>
            <person name="Volckaert G."/>
            <person name="Aert R."/>
            <person name="Robben J."/>
            <person name="Grymonprez B."/>
            <person name="Weltjens I."/>
            <person name="Vanstreels E."/>
            <person name="Rieger M."/>
            <person name="Schaefer M."/>
            <person name="Mueller-Auer S."/>
            <person name="Gabel C."/>
            <person name="Fuchs M."/>
            <person name="Duesterhoeft A."/>
            <person name="Fritzc C."/>
            <person name="Holzer E."/>
            <person name="Moestl D."/>
            <person name="Hilbert H."/>
            <person name="Borzym K."/>
            <person name="Langer I."/>
            <person name="Beck A."/>
            <person name="Lehrach H."/>
            <person name="Reinhardt R."/>
            <person name="Pohl T.M."/>
            <person name="Eger P."/>
            <person name="Zimmermann W."/>
            <person name="Wedler H."/>
            <person name="Wambutt R."/>
            <person name="Purnelle B."/>
            <person name="Goffeau A."/>
            <person name="Cadieu E."/>
            <person name="Dreano S."/>
            <person name="Gloux S."/>
            <person name="Lelaure V."/>
            <person name="Mottier S."/>
            <person name="Galibert F."/>
            <person name="Aves S.J."/>
            <person name="Xiang Z."/>
            <person name="Hunt C."/>
            <person name="Moore K."/>
            <person name="Hurst S.M."/>
            <person name="Lucas M."/>
            <person name="Rochet M."/>
            <person name="Gaillardin C."/>
            <person name="Tallada V.A."/>
            <person name="Garzon A."/>
            <person name="Thode G."/>
            <person name="Daga R.R."/>
            <person name="Cruzado L."/>
            <person name="Jimenez J."/>
            <person name="Sanchez M."/>
            <person name="del Rey F."/>
            <person name="Benito J."/>
            <person name="Dominguez A."/>
            <person name="Revuelta J.L."/>
            <person name="Moreno S."/>
            <person name="Armstrong J."/>
            <person name="Forsburg S.L."/>
            <person name="Cerutti L."/>
            <person name="Lowe T."/>
            <person name="McCombie W.R."/>
            <person name="Paulsen I."/>
            <person name="Potashkin J."/>
            <person name="Shpakovski G.V."/>
            <person name="Ussery D."/>
            <person name="Barrell B.G."/>
            <person name="Nurse P."/>
        </authorList>
    </citation>
    <scope>NUCLEOTIDE SEQUENCE [LARGE SCALE GENOMIC DNA]</scope>
    <source>
        <strain>972 / ATCC 24843</strain>
    </source>
</reference>
<reference key="2">
    <citation type="journal article" date="2006" name="Nat. Biotechnol.">
        <title>ORFeome cloning and global analysis of protein localization in the fission yeast Schizosaccharomyces pombe.</title>
        <authorList>
            <person name="Matsuyama A."/>
            <person name="Arai R."/>
            <person name="Yashiroda Y."/>
            <person name="Shirai A."/>
            <person name="Kamata A."/>
            <person name="Sekido S."/>
            <person name="Kobayashi Y."/>
            <person name="Hashimoto A."/>
            <person name="Hamamoto M."/>
            <person name="Hiraoka Y."/>
            <person name="Horinouchi S."/>
            <person name="Yoshida M."/>
        </authorList>
    </citation>
    <scope>SUBCELLULAR LOCATION [LARGE SCALE ANALYSIS]</scope>
</reference>
<keyword id="KW-0963">Cytoplasm</keyword>
<keyword id="KW-0472">Membrane</keyword>
<keyword id="KW-1185">Reference proteome</keyword>
<keyword id="KW-0812">Transmembrane</keyword>
<keyword id="KW-1133">Transmembrane helix</keyword>
<keyword id="KW-0926">Vacuole</keyword>
<feature type="chain" id="PRO_0000306282" description="UPF0494 membrane protein C750.06c">
    <location>
        <begin position="1"/>
        <end position="280"/>
    </location>
</feature>
<feature type="transmembrane region" description="Helical" evidence="1">
    <location>
        <begin position="107"/>
        <end position="127"/>
    </location>
</feature>
<feature type="transmembrane region" description="Helical" evidence="1">
    <location>
        <begin position="144"/>
        <end position="164"/>
    </location>
</feature>
<feature type="transmembrane region" description="Helical" evidence="1">
    <location>
        <begin position="178"/>
        <end position="198"/>
    </location>
</feature>
<feature type="transmembrane region" description="Helical" evidence="1">
    <location>
        <begin position="199"/>
        <end position="219"/>
    </location>
</feature>
<sequence>MSNPESLKKQVEPPGYNELFMVEDVCNVDLEQGLDLCKPEKVNKQSQRSRQSRQSLFTNTIKPQKDKMNIKTNKIKEFLNDPFTEFSKFHNSYYPDGRISTRSNFRWPLLIIWSIIIVFAVDKKFEVQKFLSIWINENRFYSEIWVPIAIYVCLLVLMLLSLIFFAEFAVLALRVTGVIIAVLGAVLGMIIAVLGMIIAALGMIIAALGATITGLLYFGHWALYKLVILSLGFKIVTPGDVCVSNTLPTHNGETALHSETTVGSDIEQIELQNMPTPVKK</sequence>
<name>YLZ6_SCHPO</name>